<protein>
    <recommendedName>
        <fullName>E3 ubiquitin ligase PQT3-like</fullName>
        <ecNumber evidence="1">2.3.2.27</ecNumber>
    </recommendedName>
</protein>
<feature type="chain" id="PRO_0000438584" description="E3 ubiquitin ligase PQT3-like">
    <location>
        <begin position="1"/>
        <end position="892"/>
    </location>
</feature>
<feature type="domain" description="DWNN" evidence="4">
    <location>
        <begin position="3"/>
        <end position="76"/>
    </location>
</feature>
<feature type="zinc finger region" description="CCHC-type" evidence="2">
    <location>
        <begin position="210"/>
        <end position="224"/>
    </location>
</feature>
<feature type="zinc finger region" description="RING-type; degenerate" evidence="3">
    <location>
        <begin position="295"/>
        <end position="333"/>
    </location>
</feature>
<feature type="region of interest" description="Disordered" evidence="6">
    <location>
        <begin position="375"/>
        <end position="408"/>
    </location>
</feature>
<feature type="region of interest" description="Disordered" evidence="6">
    <location>
        <begin position="459"/>
        <end position="493"/>
    </location>
</feature>
<feature type="region of interest" description="Disordered" evidence="6">
    <location>
        <begin position="623"/>
        <end position="892"/>
    </location>
</feature>
<feature type="short sequence motif" description="Nuclear localization signal" evidence="5">
    <location>
        <begin position="693"/>
        <end position="700"/>
    </location>
</feature>
<feature type="compositionally biased region" description="Basic and acidic residues" evidence="6">
    <location>
        <begin position="623"/>
        <end position="644"/>
    </location>
</feature>
<feature type="compositionally biased region" description="Polar residues" evidence="6">
    <location>
        <begin position="647"/>
        <end position="666"/>
    </location>
</feature>
<feature type="compositionally biased region" description="Basic and acidic residues" evidence="6">
    <location>
        <begin position="674"/>
        <end position="692"/>
    </location>
</feature>
<feature type="compositionally biased region" description="Basic and acidic residues" evidence="6">
    <location>
        <begin position="708"/>
        <end position="745"/>
    </location>
</feature>
<feature type="compositionally biased region" description="Low complexity" evidence="6">
    <location>
        <begin position="810"/>
        <end position="832"/>
    </location>
</feature>
<feature type="compositionally biased region" description="Basic and acidic residues" evidence="6">
    <location>
        <begin position="875"/>
        <end position="892"/>
    </location>
</feature>
<feature type="modified residue" description="Phosphoserine" evidence="10">
    <location>
        <position position="285"/>
    </location>
</feature>
<feature type="modified residue" description="Phosphoserine" evidence="10">
    <location>
        <position position="404"/>
    </location>
</feature>
<feature type="modified residue" description="Phosphoserine" evidence="11">
    <location>
        <position position="866"/>
    </location>
</feature>
<feature type="splice variant" id="VSP_058684" description="In isoform 2.">
    <location>
        <begin position="1"/>
        <end position="61"/>
    </location>
</feature>
<feature type="splice variant" id="VSP_058685" description="In isoform 3.">
    <location>
        <begin position="196"/>
        <end position="198"/>
    </location>
</feature>
<accession>B9DFV2</accession>
<accession>A8MRK5</accession>
<accession>F4JX50</accession>
<accession>Q8L7L2</accession>
<accession>Q9FHH9</accession>
<reference key="1">
    <citation type="journal article" date="2000" name="DNA Res.">
        <title>Structural analysis of Arabidopsis thaliana chromosome 5. X. Sequence features of the regions of 3,076,755 bp covered by sixty P1 and TAC clones.</title>
        <authorList>
            <person name="Sato S."/>
            <person name="Nakamura Y."/>
            <person name="Kaneko T."/>
            <person name="Katoh T."/>
            <person name="Asamizu E."/>
            <person name="Kotani H."/>
            <person name="Tabata S."/>
        </authorList>
    </citation>
    <scope>NUCLEOTIDE SEQUENCE [LARGE SCALE GENOMIC DNA]</scope>
    <source>
        <strain>cv. Columbia</strain>
    </source>
</reference>
<reference key="2">
    <citation type="submission" date="1999-04" db="EMBL/GenBank/DDBJ databases">
        <title>Structural analysis of Arabidopsis thaliana chromosome 5. XI.</title>
        <authorList>
            <person name="Kaneko T."/>
            <person name="Katoh T."/>
            <person name="Asamizu E."/>
            <person name="Sato S."/>
            <person name="Nakamura Y."/>
            <person name="Kotani H."/>
            <person name="Tabata S."/>
        </authorList>
    </citation>
    <scope>NUCLEOTIDE SEQUENCE [LARGE SCALE GENOMIC DNA]</scope>
    <source>
        <strain>cv. Columbia</strain>
    </source>
</reference>
<reference key="3">
    <citation type="journal article" date="2017" name="Plant J.">
        <title>Araport11: a complete reannotation of the Arabidopsis thaliana reference genome.</title>
        <authorList>
            <person name="Cheng C.Y."/>
            <person name="Krishnakumar V."/>
            <person name="Chan A.P."/>
            <person name="Thibaud-Nissen F."/>
            <person name="Schobel S."/>
            <person name="Town C.D."/>
        </authorList>
    </citation>
    <scope>GENOME REANNOTATION</scope>
    <source>
        <strain>cv. Columbia</strain>
    </source>
</reference>
<reference key="4">
    <citation type="journal article" date="2009" name="DNA Res.">
        <title>Analysis of multiple occurrences of alternative splicing events in Arabidopsis thaliana using novel sequenced full-length cDNAs.</title>
        <authorList>
            <person name="Iida K."/>
            <person name="Fukami-Kobayashi K."/>
            <person name="Toyoda A."/>
            <person name="Sakaki Y."/>
            <person name="Kobayashi M."/>
            <person name="Seki M."/>
            <person name="Shinozaki K."/>
        </authorList>
    </citation>
    <scope>NUCLEOTIDE SEQUENCE [LARGE SCALE MRNA] (ISOFORM 1)</scope>
    <source>
        <strain>cv. Columbia</strain>
        <tissue>Root</tissue>
    </source>
</reference>
<reference key="5">
    <citation type="journal article" date="2003" name="Science">
        <title>Empirical analysis of transcriptional activity in the Arabidopsis genome.</title>
        <authorList>
            <person name="Yamada K."/>
            <person name="Lim J."/>
            <person name="Dale J.M."/>
            <person name="Chen H."/>
            <person name="Shinn P."/>
            <person name="Palm C.J."/>
            <person name="Southwick A.M."/>
            <person name="Wu H.C."/>
            <person name="Kim C.J."/>
            <person name="Nguyen M."/>
            <person name="Pham P.K."/>
            <person name="Cheuk R.F."/>
            <person name="Karlin-Newmann G."/>
            <person name="Liu S.X."/>
            <person name="Lam B."/>
            <person name="Sakano H."/>
            <person name="Wu T."/>
            <person name="Yu G."/>
            <person name="Miranda M."/>
            <person name="Quach H.L."/>
            <person name="Tripp M."/>
            <person name="Chang C.H."/>
            <person name="Lee J.M."/>
            <person name="Toriumi M.J."/>
            <person name="Chan M.M."/>
            <person name="Tang C.C."/>
            <person name="Onodera C.S."/>
            <person name="Deng J.M."/>
            <person name="Akiyama K."/>
            <person name="Ansari Y."/>
            <person name="Arakawa T."/>
            <person name="Banh J."/>
            <person name="Banno F."/>
            <person name="Bowser L."/>
            <person name="Brooks S.Y."/>
            <person name="Carninci P."/>
            <person name="Chao Q."/>
            <person name="Choy N."/>
            <person name="Enju A."/>
            <person name="Goldsmith A.D."/>
            <person name="Gurjal M."/>
            <person name="Hansen N.F."/>
            <person name="Hayashizaki Y."/>
            <person name="Johnson-Hopson C."/>
            <person name="Hsuan V.W."/>
            <person name="Iida K."/>
            <person name="Karnes M."/>
            <person name="Khan S."/>
            <person name="Koesema E."/>
            <person name="Ishida J."/>
            <person name="Jiang P.X."/>
            <person name="Jones T."/>
            <person name="Kawai J."/>
            <person name="Kamiya A."/>
            <person name="Meyers C."/>
            <person name="Nakajima M."/>
            <person name="Narusaka M."/>
            <person name="Seki M."/>
            <person name="Sakurai T."/>
            <person name="Satou M."/>
            <person name="Tamse R."/>
            <person name="Vaysberg M."/>
            <person name="Wallender E.K."/>
            <person name="Wong C."/>
            <person name="Yamamura Y."/>
            <person name="Yuan S."/>
            <person name="Shinozaki K."/>
            <person name="Davis R.W."/>
            <person name="Theologis A."/>
            <person name="Ecker J.R."/>
        </authorList>
    </citation>
    <scope>NUCLEOTIDE SEQUENCE [LARGE SCALE MRNA] OF 1-462 (ISOFORM 1)</scope>
    <source>
        <strain>cv. Columbia</strain>
    </source>
</reference>
<reference key="6">
    <citation type="journal article" date="2009" name="J. Proteomics">
        <title>Phosphoproteomic analysis of nuclei-enriched fractions from Arabidopsis thaliana.</title>
        <authorList>
            <person name="Jones A.M.E."/>
            <person name="MacLean D."/>
            <person name="Studholme D.J."/>
            <person name="Serna-Sanz A."/>
            <person name="Andreasson E."/>
            <person name="Rathjen J.P."/>
            <person name="Peck S.C."/>
        </authorList>
    </citation>
    <scope>PHOSPHORYLATION [LARGE SCALE ANALYSIS] AT SER-285 AND SER-404</scope>
    <scope>IDENTIFICATION BY MASS SPECTROMETRY [LARGE SCALE ANALYSIS]</scope>
    <source>
        <strain>cv. Columbia</strain>
    </source>
</reference>
<reference key="7">
    <citation type="journal article" date="2009" name="Plant Physiol.">
        <title>Large-scale Arabidopsis phosphoproteome profiling reveals novel chloroplast kinase substrates and phosphorylation networks.</title>
        <authorList>
            <person name="Reiland S."/>
            <person name="Messerli G."/>
            <person name="Baerenfaller K."/>
            <person name="Gerrits B."/>
            <person name="Endler A."/>
            <person name="Grossmann J."/>
            <person name="Gruissem W."/>
            <person name="Baginsky S."/>
        </authorList>
    </citation>
    <scope>PHOSPHORYLATION [LARGE SCALE ANALYSIS] AT SER-866</scope>
    <scope>IDENTIFICATION BY MASS SPECTROMETRY [LARGE SCALE ANALYSIS]</scope>
</reference>
<organism>
    <name type="scientific">Arabidopsis thaliana</name>
    <name type="common">Mouse-ear cress</name>
    <dbReference type="NCBI Taxonomy" id="3702"/>
    <lineage>
        <taxon>Eukaryota</taxon>
        <taxon>Viridiplantae</taxon>
        <taxon>Streptophyta</taxon>
        <taxon>Embryophyta</taxon>
        <taxon>Tracheophyta</taxon>
        <taxon>Spermatophyta</taxon>
        <taxon>Magnoliopsida</taxon>
        <taxon>eudicotyledons</taxon>
        <taxon>Gunneridae</taxon>
        <taxon>Pentapetalae</taxon>
        <taxon>rosids</taxon>
        <taxon>malvids</taxon>
        <taxon>Brassicales</taxon>
        <taxon>Brassicaceae</taxon>
        <taxon>Camelineae</taxon>
        <taxon>Arabidopsis</taxon>
    </lineage>
</organism>
<comment type="catalytic activity">
    <reaction evidence="1">
        <text>S-ubiquitinyl-[E2 ubiquitin-conjugating enzyme]-L-cysteine + [acceptor protein]-L-lysine = [E2 ubiquitin-conjugating enzyme]-L-cysteine + N(6)-ubiquitinyl-[acceptor protein]-L-lysine.</text>
        <dbReference type="EC" id="2.3.2.27"/>
    </reaction>
</comment>
<comment type="subcellular location">
    <subcellularLocation>
        <location evidence="1 5">Nucleus</location>
    </subcellularLocation>
</comment>
<comment type="alternative products">
    <event type="alternative splicing"/>
    <isoform>
        <id>B9DFV2-1</id>
        <name>1</name>
        <sequence type="displayed"/>
    </isoform>
    <isoform>
        <id>B9DFV2-2</id>
        <name>2</name>
        <sequence type="described" ref="VSP_058684"/>
    </isoform>
    <isoform>
        <id>B9DFV2-3</id>
        <name>3</name>
        <sequence type="described" ref="VSP_058685"/>
    </isoform>
</comment>
<comment type="sequence caution" evidence="7">
    <conflict type="erroneous gene model prediction">
        <sequence resource="EMBL-CDS" id="BAB11612"/>
    </conflict>
</comment>
<name>PQT3L_ARATH</name>
<evidence type="ECO:0000250" key="1">
    <source>
        <dbReference type="UniProtKB" id="F4JP52"/>
    </source>
</evidence>
<evidence type="ECO:0000255" key="2">
    <source>
        <dbReference type="PROSITE-ProRule" id="PRU00047"/>
    </source>
</evidence>
<evidence type="ECO:0000255" key="3">
    <source>
        <dbReference type="PROSITE-ProRule" id="PRU00175"/>
    </source>
</evidence>
<evidence type="ECO:0000255" key="4">
    <source>
        <dbReference type="PROSITE-ProRule" id="PRU00612"/>
    </source>
</evidence>
<evidence type="ECO:0000255" key="5">
    <source>
        <dbReference type="PROSITE-ProRule" id="PRU00768"/>
    </source>
</evidence>
<evidence type="ECO:0000256" key="6">
    <source>
        <dbReference type="SAM" id="MobiDB-lite"/>
    </source>
</evidence>
<evidence type="ECO:0000305" key="7"/>
<evidence type="ECO:0000312" key="8">
    <source>
        <dbReference type="Araport" id="AT5G47430"/>
    </source>
</evidence>
<evidence type="ECO:0000312" key="9">
    <source>
        <dbReference type="EMBL" id="BAB11612.1"/>
    </source>
</evidence>
<evidence type="ECO:0007744" key="10">
    <source>
    </source>
</evidence>
<evidence type="ECO:0007744" key="11">
    <source>
    </source>
</evidence>
<keyword id="KW-0025">Alternative splicing</keyword>
<keyword id="KW-0479">Metal-binding</keyword>
<keyword id="KW-0539">Nucleus</keyword>
<keyword id="KW-0597">Phosphoprotein</keyword>
<keyword id="KW-1185">Reference proteome</keyword>
<keyword id="KW-0808">Transferase</keyword>
<keyword id="KW-0833">Ubl conjugation pathway</keyword>
<keyword id="KW-0862">Zinc</keyword>
<keyword id="KW-0863">Zinc-finger</keyword>
<dbReference type="EC" id="2.3.2.27" evidence="1"/>
<dbReference type="EMBL" id="AB018117">
    <property type="protein sequence ID" value="BAB11612.1"/>
    <property type="status" value="ALT_SEQ"/>
    <property type="molecule type" value="Genomic_DNA"/>
</dbReference>
<dbReference type="EMBL" id="AB025628">
    <property type="protein sequence ID" value="BAB11612.1"/>
    <property type="status" value="JOINED"/>
    <property type="molecule type" value="Genomic_DNA"/>
</dbReference>
<dbReference type="EMBL" id="CP002688">
    <property type="protein sequence ID" value="AED95508.1"/>
    <property type="molecule type" value="Genomic_DNA"/>
</dbReference>
<dbReference type="EMBL" id="CP002688">
    <property type="protein sequence ID" value="AED95509.1"/>
    <property type="molecule type" value="Genomic_DNA"/>
</dbReference>
<dbReference type="EMBL" id="CP002688">
    <property type="protein sequence ID" value="AED95510.1"/>
    <property type="molecule type" value="Genomic_DNA"/>
</dbReference>
<dbReference type="EMBL" id="AK316913">
    <property type="protein sequence ID" value="BAH19619.1"/>
    <property type="molecule type" value="mRNA"/>
</dbReference>
<dbReference type="EMBL" id="AY128390">
    <property type="protein sequence ID" value="AAM91593.1"/>
    <property type="molecule type" value="mRNA"/>
</dbReference>
<dbReference type="RefSeq" id="NP_001078725.1">
    <molecule id="B9DFV2-2"/>
    <property type="nucleotide sequence ID" value="NM_001085256.1"/>
</dbReference>
<dbReference type="RefSeq" id="NP_001190484.1">
    <molecule id="B9DFV2-3"/>
    <property type="nucleotide sequence ID" value="NM_001203555.1"/>
</dbReference>
<dbReference type="RefSeq" id="NP_199554.2">
    <molecule id="B9DFV2-1"/>
    <property type="nucleotide sequence ID" value="NM_124114.4"/>
</dbReference>
<dbReference type="SMR" id="B9DFV2"/>
<dbReference type="FunCoup" id="B9DFV2">
    <property type="interactions" value="1100"/>
</dbReference>
<dbReference type="STRING" id="3702.B9DFV2"/>
<dbReference type="iPTMnet" id="B9DFV2"/>
<dbReference type="PaxDb" id="3702-AT5G47430.1"/>
<dbReference type="EnsemblPlants" id="AT5G47430.1">
    <molecule id="B9DFV2-1"/>
    <property type="protein sequence ID" value="AT5G47430.1"/>
    <property type="gene ID" value="AT5G47430"/>
</dbReference>
<dbReference type="EnsemblPlants" id="AT5G47430.2">
    <molecule id="B9DFV2-2"/>
    <property type="protein sequence ID" value="AT5G47430.2"/>
    <property type="gene ID" value="AT5G47430"/>
</dbReference>
<dbReference type="EnsemblPlants" id="AT5G47430.3">
    <molecule id="B9DFV2-3"/>
    <property type="protein sequence ID" value="AT5G47430.3"/>
    <property type="gene ID" value="AT5G47430"/>
</dbReference>
<dbReference type="GeneID" id="834790"/>
<dbReference type="Gramene" id="AT5G47430.1">
    <molecule id="B9DFV2-1"/>
    <property type="protein sequence ID" value="AT5G47430.1"/>
    <property type="gene ID" value="AT5G47430"/>
</dbReference>
<dbReference type="Gramene" id="AT5G47430.2">
    <molecule id="B9DFV2-2"/>
    <property type="protein sequence ID" value="AT5G47430.2"/>
    <property type="gene ID" value="AT5G47430"/>
</dbReference>
<dbReference type="Gramene" id="AT5G47430.3">
    <molecule id="B9DFV2-3"/>
    <property type="protein sequence ID" value="AT5G47430.3"/>
    <property type="gene ID" value="AT5G47430"/>
</dbReference>
<dbReference type="KEGG" id="ath:AT5G47430"/>
<dbReference type="Araport" id="AT5G47430"/>
<dbReference type="TAIR" id="AT5G47430"/>
<dbReference type="eggNOG" id="KOG0314">
    <property type="taxonomic scope" value="Eukaryota"/>
</dbReference>
<dbReference type="HOGENOM" id="CLU_015100_2_0_1"/>
<dbReference type="InParanoid" id="B9DFV2"/>
<dbReference type="OMA" id="RTSHEHP"/>
<dbReference type="PhylomeDB" id="B9DFV2"/>
<dbReference type="PRO" id="PR:B9DFV2"/>
<dbReference type="Proteomes" id="UP000006548">
    <property type="component" value="Chromosome 5"/>
</dbReference>
<dbReference type="ExpressionAtlas" id="B9DFV2">
    <property type="expression patterns" value="baseline and differential"/>
</dbReference>
<dbReference type="GO" id="GO:0005634">
    <property type="term" value="C:nucleus"/>
    <property type="evidence" value="ECO:0007669"/>
    <property type="project" value="UniProtKB-SubCell"/>
</dbReference>
<dbReference type="GO" id="GO:0003676">
    <property type="term" value="F:nucleic acid binding"/>
    <property type="evidence" value="ECO:0007669"/>
    <property type="project" value="InterPro"/>
</dbReference>
<dbReference type="GO" id="GO:0061630">
    <property type="term" value="F:ubiquitin protein ligase activity"/>
    <property type="evidence" value="ECO:0007669"/>
    <property type="project" value="InterPro"/>
</dbReference>
<dbReference type="GO" id="GO:0008270">
    <property type="term" value="F:zinc ion binding"/>
    <property type="evidence" value="ECO:0007669"/>
    <property type="project" value="UniProtKB-KW"/>
</dbReference>
<dbReference type="GO" id="GO:0006397">
    <property type="term" value="P:mRNA processing"/>
    <property type="evidence" value="ECO:0007669"/>
    <property type="project" value="InterPro"/>
</dbReference>
<dbReference type="GO" id="GO:0016567">
    <property type="term" value="P:protein ubiquitination"/>
    <property type="evidence" value="ECO:0007669"/>
    <property type="project" value="InterPro"/>
</dbReference>
<dbReference type="CDD" id="cd16620">
    <property type="entry name" value="vRING-HC-C4C4_RBBP6"/>
    <property type="match status" value="1"/>
</dbReference>
<dbReference type="Gene3D" id="3.10.20.90">
    <property type="entry name" value="Phosphatidylinositol 3-kinase Catalytic Subunit, Chain A, domain 1"/>
    <property type="match status" value="1"/>
</dbReference>
<dbReference type="Gene3D" id="4.10.60.10">
    <property type="entry name" value="Zinc finger, CCHC-type"/>
    <property type="match status" value="1"/>
</dbReference>
<dbReference type="Gene3D" id="3.30.40.10">
    <property type="entry name" value="Zinc/RING finger domain, C3HC4 (zinc finger)"/>
    <property type="match status" value="1"/>
</dbReference>
<dbReference type="InterPro" id="IPR014891">
    <property type="entry name" value="DWNN_domain"/>
</dbReference>
<dbReference type="InterPro" id="IPR033489">
    <property type="entry name" value="RBBP6"/>
</dbReference>
<dbReference type="InterPro" id="IPR025829">
    <property type="entry name" value="Zn_knuckle_CX2CX3GHX4C"/>
</dbReference>
<dbReference type="InterPro" id="IPR036875">
    <property type="entry name" value="Znf_CCHC_sf"/>
</dbReference>
<dbReference type="InterPro" id="IPR013083">
    <property type="entry name" value="Znf_RING/FYVE/PHD"/>
</dbReference>
<dbReference type="PANTHER" id="PTHR15439:SF13">
    <property type="entry name" value="E3 UBIQUITIN LIGASE PQT3-LIKE"/>
    <property type="match status" value="1"/>
</dbReference>
<dbReference type="PANTHER" id="PTHR15439">
    <property type="entry name" value="RETINOBLASTOMA-BINDING PROTEIN 6"/>
    <property type="match status" value="1"/>
</dbReference>
<dbReference type="Pfam" id="PF08783">
    <property type="entry name" value="DWNN"/>
    <property type="match status" value="1"/>
</dbReference>
<dbReference type="Pfam" id="PF13696">
    <property type="entry name" value="zf-CCHC_2"/>
    <property type="match status" value="1"/>
</dbReference>
<dbReference type="SMART" id="SM01180">
    <property type="entry name" value="DWNN"/>
    <property type="match status" value="1"/>
</dbReference>
<dbReference type="SUPFAM" id="SSF57756">
    <property type="entry name" value="Retrovirus zinc finger-like domains"/>
    <property type="match status" value="1"/>
</dbReference>
<dbReference type="SUPFAM" id="SSF57850">
    <property type="entry name" value="RING/U-box"/>
    <property type="match status" value="1"/>
</dbReference>
<dbReference type="PROSITE" id="PS51282">
    <property type="entry name" value="DWNN"/>
    <property type="match status" value="1"/>
</dbReference>
<sequence length="892" mass="99083">MAIYYKFKSARDYDTIAMDGPFISVGILKDKIFETKHLGTGKDLDIVVSNAQTNEEYLDEAMLIPKNTSVLIRRVPGRPRITVITTQEPRIQNKVEDVQAETTNFPVADPSAAEFPEDEYDEFGTDLYSIPDTQDAQHIIPRPHLATADDKVDEESKIQALIDTPALDWQQRQGQDTFGAGRGYGRGMPGRMNGRGFGMERKTPPPGYVCHRCNIPGHFIQHCPTNGDPNYDVKRVKPPTGIPKSMLMATPDGSYSLPSGAVAVLKPNEDAFEKEMEGLPSTTRSVGELPPELKCPLCKEVMKDAALTSKCCYKSFCDKCIRDHIISKSMCVCGRSDVLADDLLPNKTLRDTINRILEAGNDSTENVGSVGHIPDLESARCPPPKALSPTTSVASKGEKKPVLSNNNDASTLKAPMEVAEITSAPRASAEVNVEKPVDACESTQGSVIVKEATVSKLNTQAPKEEMQQQVAAGEPGKKKKKKPRVPGNDMQWNPVPDLAGPDYMMQMGPGPQYFNGMQPGFNGVQPGFNGVQPGFNGFHPGFNGFGGPFPGAMPPFMGYGLNPMDMGFGGGMNMMHPDPFMAQGFGFPNIPPPHRDLAEMGNRMNLQRAMMGRDEAEARNAEMLRKRENERRPEGGKMFRDGENSRMMMNNGTSASASSINPNKSRQAPPPPIHDYDRRRRPEKRLSPEHPPTRKNISPSRDSKRKSERYPDERDRQRDRERSRHQDVDREHDRTRDRRDEDRSRDHRHHRGETERSQHHHRKRSEPPSSEPPVPATKAEIENNLKSSVFARISFPEEETSSGKRRKVPSSSSTSVTDPSASASAAAAVGTSVHRHSSRKEIEVADYESSDEDRHFKRKPSRYARSPPVVVSDVSEDKLRYSKRGKGERSRA</sequence>
<gene>
    <name evidence="8" type="ordered locus">At5g47430</name>
    <name evidence="9" type="ORF">MQL5.29</name>
</gene>
<proteinExistence type="evidence at protein level"/>